<dbReference type="EMBL" id="U09841">
    <property type="protein sequence ID" value="AAA83415.1"/>
    <property type="molecule type" value="Genomic_DNA"/>
</dbReference>
<dbReference type="EMBL" id="U11582">
    <property type="protein sequence ID" value="AAB65072.1"/>
    <property type="molecule type" value="Genomic_DNA"/>
</dbReference>
<dbReference type="EMBL" id="BK006934">
    <property type="protein sequence ID" value="DAA06666.1"/>
    <property type="molecule type" value="Genomic_DNA"/>
</dbReference>
<dbReference type="PIR" id="S46833">
    <property type="entry name" value="S46833"/>
</dbReference>
<dbReference type="RefSeq" id="NP_011844.1">
    <property type="nucleotide sequence ID" value="NM_001179099.1"/>
</dbReference>
<dbReference type="SMR" id="P38700"/>
<dbReference type="BioGRID" id="36404">
    <property type="interactions" value="43"/>
</dbReference>
<dbReference type="ComplexPortal" id="CPX-533">
    <property type="entry name" value="Adaptor complex AP-1R"/>
</dbReference>
<dbReference type="DIP" id="DIP-1200N"/>
<dbReference type="FunCoup" id="P38700">
    <property type="interactions" value="84"/>
</dbReference>
<dbReference type="IntAct" id="P38700">
    <property type="interactions" value="10"/>
</dbReference>
<dbReference type="MINT" id="P38700"/>
<dbReference type="STRING" id="4932.YHL019C"/>
<dbReference type="GlyGen" id="P38700">
    <property type="glycosylation" value="1 site"/>
</dbReference>
<dbReference type="iPTMnet" id="P38700"/>
<dbReference type="PaxDb" id="4932-YHL019C"/>
<dbReference type="PeptideAtlas" id="P38700"/>
<dbReference type="TopDownProteomics" id="P38700"/>
<dbReference type="EnsemblFungi" id="YHL019C_mRNA">
    <property type="protein sequence ID" value="YHL019C"/>
    <property type="gene ID" value="YHL019C"/>
</dbReference>
<dbReference type="GeneID" id="856367"/>
<dbReference type="KEGG" id="sce:YHL019C"/>
<dbReference type="AGR" id="SGD:S000001011"/>
<dbReference type="SGD" id="S000001011">
    <property type="gene designation" value="APM2"/>
</dbReference>
<dbReference type="VEuPathDB" id="FungiDB:YHL019C"/>
<dbReference type="eggNOG" id="KOG0937">
    <property type="taxonomic scope" value="Eukaryota"/>
</dbReference>
<dbReference type="HOGENOM" id="CLU_026996_0_2_1"/>
<dbReference type="InParanoid" id="P38700"/>
<dbReference type="OMA" id="WVRYKTI"/>
<dbReference type="OrthoDB" id="10259133at2759"/>
<dbReference type="BioCyc" id="YEAST:G3O-31039-MONOMER"/>
<dbReference type="BioGRID-ORCS" id="856367">
    <property type="hits" value="0 hits in 10 CRISPR screens"/>
</dbReference>
<dbReference type="PRO" id="PR:P38700"/>
<dbReference type="Proteomes" id="UP000002311">
    <property type="component" value="Chromosome VIII"/>
</dbReference>
<dbReference type="RNAct" id="P38700">
    <property type="molecule type" value="protein"/>
</dbReference>
<dbReference type="GO" id="GO:0030121">
    <property type="term" value="C:AP-1 adaptor complex"/>
    <property type="evidence" value="ECO:0000269"/>
    <property type="project" value="ComplexPortal"/>
</dbReference>
<dbReference type="GO" id="GO:0030136">
    <property type="term" value="C:clathrin-coated vesicle"/>
    <property type="evidence" value="ECO:0000318"/>
    <property type="project" value="GO_Central"/>
</dbReference>
<dbReference type="GO" id="GO:0005829">
    <property type="term" value="C:cytosol"/>
    <property type="evidence" value="ECO:0007669"/>
    <property type="project" value="GOC"/>
</dbReference>
<dbReference type="GO" id="GO:0005769">
    <property type="term" value="C:early endosome"/>
    <property type="evidence" value="ECO:0000314"/>
    <property type="project" value="SGD"/>
</dbReference>
<dbReference type="GO" id="GO:0031901">
    <property type="term" value="C:early endosome membrane"/>
    <property type="evidence" value="ECO:0007669"/>
    <property type="project" value="UniProtKB-SubCell"/>
</dbReference>
<dbReference type="GO" id="GO:0000139">
    <property type="term" value="C:Golgi membrane"/>
    <property type="evidence" value="ECO:0007669"/>
    <property type="project" value="UniProtKB-SubCell"/>
</dbReference>
<dbReference type="GO" id="GO:0005634">
    <property type="term" value="C:nucleus"/>
    <property type="evidence" value="ECO:0007005"/>
    <property type="project" value="SGD"/>
</dbReference>
<dbReference type="GO" id="GO:0005802">
    <property type="term" value="C:trans-Golgi network"/>
    <property type="evidence" value="ECO:0000314"/>
    <property type="project" value="SGD"/>
</dbReference>
<dbReference type="GO" id="GO:0035615">
    <property type="term" value="F:clathrin adaptor activity"/>
    <property type="evidence" value="ECO:0000318"/>
    <property type="project" value="GO_Central"/>
</dbReference>
<dbReference type="GO" id="GO:0006896">
    <property type="term" value="P:Golgi to vacuole transport"/>
    <property type="evidence" value="ECO:0000315"/>
    <property type="project" value="SGD"/>
</dbReference>
<dbReference type="GO" id="GO:0006886">
    <property type="term" value="P:intracellular protein transport"/>
    <property type="evidence" value="ECO:0007669"/>
    <property type="project" value="InterPro"/>
</dbReference>
<dbReference type="GO" id="GO:0048203">
    <property type="term" value="P:vesicle targeting, trans-Golgi to endosome"/>
    <property type="evidence" value="ECO:0000315"/>
    <property type="project" value="ComplexPortal"/>
</dbReference>
<dbReference type="GO" id="GO:0016192">
    <property type="term" value="P:vesicle-mediated transport"/>
    <property type="evidence" value="ECO:0000318"/>
    <property type="project" value="GO_Central"/>
</dbReference>
<dbReference type="CDD" id="cd09250">
    <property type="entry name" value="AP-1_Mu1_Cterm"/>
    <property type="match status" value="1"/>
</dbReference>
<dbReference type="CDD" id="cd14828">
    <property type="entry name" value="AP_Mu_N"/>
    <property type="match status" value="1"/>
</dbReference>
<dbReference type="FunFam" id="3.30.450.60:FF:000030">
    <property type="entry name" value="APM2p protein"/>
    <property type="match status" value="1"/>
</dbReference>
<dbReference type="Gene3D" id="3.30.450.60">
    <property type="match status" value="1"/>
</dbReference>
<dbReference type="Gene3D" id="2.60.40.1170">
    <property type="entry name" value="Mu homology domain, subdomain B"/>
    <property type="match status" value="2"/>
</dbReference>
<dbReference type="InterPro" id="IPR050431">
    <property type="entry name" value="Adaptor_comp_med_subunit"/>
</dbReference>
<dbReference type="InterPro" id="IPR036168">
    <property type="entry name" value="AP2_Mu_C_sf"/>
</dbReference>
<dbReference type="InterPro" id="IPR027200">
    <property type="entry name" value="Apm2_N"/>
</dbReference>
<dbReference type="InterPro" id="IPR018240">
    <property type="entry name" value="Clathrin_mu_CS"/>
</dbReference>
<dbReference type="InterPro" id="IPR011012">
    <property type="entry name" value="Longin-like_dom_sf"/>
</dbReference>
<dbReference type="InterPro" id="IPR028565">
    <property type="entry name" value="MHD"/>
</dbReference>
<dbReference type="PANTHER" id="PTHR10529">
    <property type="entry name" value="AP COMPLEX SUBUNIT MU"/>
    <property type="match status" value="1"/>
</dbReference>
<dbReference type="Pfam" id="PF00928">
    <property type="entry name" value="Adap_comp_sub"/>
    <property type="match status" value="1"/>
</dbReference>
<dbReference type="SUPFAM" id="SSF49447">
    <property type="entry name" value="Second domain of Mu2 adaptin subunit (ap50) of ap2 adaptor"/>
    <property type="match status" value="1"/>
</dbReference>
<dbReference type="SUPFAM" id="SSF64356">
    <property type="entry name" value="SNARE-like"/>
    <property type="match status" value="1"/>
</dbReference>
<dbReference type="PROSITE" id="PS00990">
    <property type="entry name" value="CLAT_ADAPTOR_M_1"/>
    <property type="match status" value="1"/>
</dbReference>
<dbReference type="PROSITE" id="PS00991">
    <property type="entry name" value="CLAT_ADAPTOR_M_2"/>
    <property type="match status" value="1"/>
</dbReference>
<dbReference type="PROSITE" id="PS51072">
    <property type="entry name" value="MHD"/>
    <property type="match status" value="1"/>
</dbReference>
<feature type="chain" id="PRO_0000193793" description="Adaptin medium chain homolog APM2">
    <location>
        <begin position="1"/>
        <end position="605"/>
    </location>
</feature>
<feature type="domain" description="MHD" evidence="1">
    <location>
        <begin position="269"/>
        <end position="604"/>
    </location>
</feature>
<feature type="region of interest" description="Disordered" evidence="2">
    <location>
        <begin position="150"/>
        <end position="196"/>
    </location>
</feature>
<feature type="compositionally biased region" description="Low complexity" evidence="2">
    <location>
        <begin position="155"/>
        <end position="171"/>
    </location>
</feature>
<feature type="compositionally biased region" description="Basic residues" evidence="2">
    <location>
        <begin position="174"/>
        <end position="196"/>
    </location>
</feature>
<feature type="mutagenesis site" description="Leads to sensitivity to sertraline, when associated with S-275." evidence="5">
    <original>F</original>
    <variation>A</variation>
    <location>
        <position position="273"/>
    </location>
</feature>
<feature type="mutagenesis site" description="Leads to sensitivity to sertraline, when associated with A-273." evidence="5">
    <original>D</original>
    <variation>S</variation>
    <location>
        <position position="275"/>
    </location>
</feature>
<gene>
    <name type="primary">APM2</name>
    <name type="ordered locus">YHL019C</name>
</gene>
<accession>P38700</accession>
<accession>D3DKR4</accession>
<sequence>MSSSLFILDENLEPLVSKNIRALPNLSSVLSSFKQCYHDGSPPILSQNDWFFIHLKRDFLHFVSVIHTTDKPNIDLMTILAFLEQFYHLLQKYFEIEVLTKNVILDNILLVLELIDECIDFGIVQVTDPSIIKDYIRVKVNVPRVTVDNEEWSPGEESSSSSGSDSDSEYSNTNKRKDKKKKRKKKKGTKGKSVGKSKLKSIMVNNKENRGINVVETVKETLRNKNDTGKEAANDELPNDGNDLYINGDIAKTIIMPISWRTKGIHYAKNEFFLDVIERVQYLMDFEKGVIRKNLIHGEIVCRCYLSGMPKLKISINKILNRDPQFMSNSSFHQCVSLDSINTIEKDEEKNSDDDAGLQAATDAREIEFIPPDGEFVLCQYELKRHVKDAPMVRLKDFEIKPKLKKFKIQIVTKIQTNFKPTNSTSKLNVRIPLTKVFQEYKIDLSKQIRFKANIGKVVFNLSDDFLLWEIQTMKGHREHSTNKSSQYNSDEDDPNTCASMVAEFPLFNQEEYDRLQEEMKTSMNPPPLRTGPRLEELYRQVHDQQTSHVTPRDKLVNIDFEIPYCTCSGLKVEYLKVEEPQLQYQSFPWVRYKTVSDEEYAYIV</sequence>
<evidence type="ECO:0000255" key="1">
    <source>
        <dbReference type="PROSITE-ProRule" id="PRU00404"/>
    </source>
</evidence>
<evidence type="ECO:0000256" key="2">
    <source>
        <dbReference type="SAM" id="MobiDB-lite"/>
    </source>
</evidence>
<evidence type="ECO:0000269" key="3">
    <source>
    </source>
</evidence>
<evidence type="ECO:0000269" key="4">
    <source>
    </source>
</evidence>
<evidence type="ECO:0000269" key="5">
    <source>
    </source>
</evidence>
<evidence type="ECO:0000305" key="6"/>
<protein>
    <recommendedName>
        <fullName>Adaptin medium chain homolog APM2</fullName>
    </recommendedName>
    <alternativeName>
        <fullName>Adaptin-mu1-II</fullName>
    </alternativeName>
</protein>
<organism>
    <name type="scientific">Saccharomyces cerevisiae (strain ATCC 204508 / S288c)</name>
    <name type="common">Baker's yeast</name>
    <dbReference type="NCBI Taxonomy" id="559292"/>
    <lineage>
        <taxon>Eukaryota</taxon>
        <taxon>Fungi</taxon>
        <taxon>Dikarya</taxon>
        <taxon>Ascomycota</taxon>
        <taxon>Saccharomycotina</taxon>
        <taxon>Saccharomycetes</taxon>
        <taxon>Saccharomycetales</taxon>
        <taxon>Saccharomycetaceae</taxon>
        <taxon>Saccharomyces</taxon>
    </lineage>
</organism>
<reference key="1">
    <citation type="journal article" date="1995" name="Mol. Biol. Cell">
        <title>A late Golgi sorting function for Saccharomyces cerevisiae Apm1p, but not for Apm2p, a second yeast clathrin AP medium chain-related protein.</title>
        <authorList>
            <person name="Stepp J.D."/>
            <person name="Pellicena-Palle A."/>
            <person name="Hamilton S."/>
            <person name="Kirchhausen T."/>
            <person name="Lemmon S.K."/>
        </authorList>
    </citation>
    <scope>NUCLEOTIDE SEQUENCE [GENOMIC DNA]</scope>
    <source>
        <strain>S288c / REE526</strain>
    </source>
</reference>
<reference key="2">
    <citation type="journal article" date="1994" name="Science">
        <title>Complete nucleotide sequence of Saccharomyces cerevisiae chromosome VIII.</title>
        <authorList>
            <person name="Johnston M."/>
            <person name="Andrews S."/>
            <person name="Brinkman R."/>
            <person name="Cooper J."/>
            <person name="Ding H."/>
            <person name="Dover J."/>
            <person name="Du Z."/>
            <person name="Favello A."/>
            <person name="Fulton L."/>
            <person name="Gattung S."/>
            <person name="Geisel C."/>
            <person name="Kirsten J."/>
            <person name="Kucaba T."/>
            <person name="Hillier L.W."/>
            <person name="Jier M."/>
            <person name="Johnston L."/>
            <person name="Langston Y."/>
            <person name="Latreille P."/>
            <person name="Louis E.J."/>
            <person name="Macri C."/>
            <person name="Mardis E."/>
            <person name="Menezes S."/>
            <person name="Mouser L."/>
            <person name="Nhan M."/>
            <person name="Rifkin L."/>
            <person name="Riles L."/>
            <person name="St Peter H."/>
            <person name="Trevaskis E."/>
            <person name="Vaughan K."/>
            <person name="Vignati D."/>
            <person name="Wilcox L."/>
            <person name="Wohldman P."/>
            <person name="Waterston R."/>
            <person name="Wilson R."/>
            <person name="Vaudin M."/>
        </authorList>
    </citation>
    <scope>NUCLEOTIDE SEQUENCE [LARGE SCALE GENOMIC DNA]</scope>
    <source>
        <strain>ATCC 204508 / S288c</strain>
    </source>
</reference>
<reference key="3">
    <citation type="journal article" date="2014" name="G3 (Bethesda)">
        <title>The reference genome sequence of Saccharomyces cerevisiae: Then and now.</title>
        <authorList>
            <person name="Engel S.R."/>
            <person name="Dietrich F.S."/>
            <person name="Fisk D.G."/>
            <person name="Binkley G."/>
            <person name="Balakrishnan R."/>
            <person name="Costanzo M.C."/>
            <person name="Dwight S.S."/>
            <person name="Hitz B.C."/>
            <person name="Karra K."/>
            <person name="Nash R.S."/>
            <person name="Weng S."/>
            <person name="Wong E.D."/>
            <person name="Lloyd P."/>
            <person name="Skrzypek M.S."/>
            <person name="Miyasato S.R."/>
            <person name="Simison M."/>
            <person name="Cherry J.M."/>
        </authorList>
    </citation>
    <scope>GENOME REANNOTATION</scope>
    <source>
        <strain>ATCC 204508 / S288c</strain>
    </source>
</reference>
<reference key="4">
    <citation type="journal article" date="2003" name="Nature">
        <title>Global analysis of protein expression in yeast.</title>
        <authorList>
            <person name="Ghaemmaghami S."/>
            <person name="Huh W.-K."/>
            <person name="Bower K."/>
            <person name="Howson R.W."/>
            <person name="Belle A."/>
            <person name="Dephoure N."/>
            <person name="O'Shea E.K."/>
            <person name="Weissman J.S."/>
        </authorList>
    </citation>
    <scope>LEVEL OF PROTEIN EXPRESSION [LARGE SCALE ANALYSIS]</scope>
</reference>
<reference key="5">
    <citation type="journal article" date="1999" name="Mol. Biol. Cell">
        <title>Adaptor complex-independent clathrin function in yeast.</title>
        <authorList>
            <person name="Yeung B.G."/>
            <person name="Phan H.L."/>
            <person name="Payne G.S."/>
        </authorList>
    </citation>
    <scope>INTERACTION WITH APL2</scope>
</reference>
<reference key="6">
    <citation type="journal article" date="2016" name="Mol. Biol. Cell">
        <title>The alternate AP-1 adaptor subunit Apm2 interacts with the Mil1 regulatory protein and confers differential cargo sorting.</title>
        <authorList>
            <person name="Whitfield S.T."/>
            <person name="Burston H.E."/>
            <person name="Bean B.D."/>
            <person name="Raghuram N."/>
            <person name="Maldonado-Baez L."/>
            <person name="Davey M."/>
            <person name="Wendland B."/>
            <person name="Conibear E."/>
        </authorList>
    </citation>
    <scope>FUNCTION</scope>
    <scope>SUBUNIT</scope>
    <scope>INTERACTION WITH MIL1</scope>
    <scope>SUBCELLULAR LOCATION</scope>
    <scope>DISRUPTION PHENOTYPE</scope>
    <scope>MUTAGENESIS OF PHE-273 AND ASP-275</scope>
</reference>
<name>APM2_YEAST</name>
<keyword id="KW-0968">Cytoplasmic vesicle</keyword>
<keyword id="KW-0967">Endosome</keyword>
<keyword id="KW-0333">Golgi apparatus</keyword>
<keyword id="KW-0472">Membrane</keyword>
<keyword id="KW-0653">Protein transport</keyword>
<keyword id="KW-1185">Reference proteome</keyword>
<keyword id="KW-0813">Transport</keyword>
<proteinExistence type="evidence at protein level"/>
<comment type="function">
    <text evidence="5">Component of the AP-1-related (AP-1R) complex, an adapter protein complex that mediates of cargo protein sorting in clathrin-coated vesicles (PubMed:26658609). AP-1R has a specific role in SNARE SNC1 sorting (PubMed:26658609). In contrast to the APM1-containing AP-1 complex, AP-1R is incapable of sorting CHS3 (PubMed:26658609).</text>
</comment>
<comment type="subunit">
    <text evidence="3 5">Component of the AP-1R complex composed of at least APM2, APL4 and APS1 (PubMed:26658609). Interacts with MIL1 (PubMed:26658609). Interacts with APL2 (PubMed:10564262).</text>
</comment>
<comment type="interaction">
    <interactant intactId="EBI-2705">
        <id>P38700</id>
    </interactant>
    <interactant intactId="EBI-2206">
        <id>P36000</id>
        <label>APL2</label>
    </interactant>
    <organismsDiffer>false</organismsDiffer>
    <experiments>7</experiments>
</comment>
<comment type="subcellular location">
    <subcellularLocation>
        <location evidence="5">Golgi apparatus membrane</location>
        <topology evidence="5">Peripheral membrane protein</topology>
    </subcellularLocation>
    <subcellularLocation>
        <location evidence="5">Early endosome membrane</location>
        <topology evidence="5">Peripheral membrane protein</topology>
    </subcellularLocation>
    <subcellularLocation>
        <location evidence="5">Cytoplasmic vesicle</location>
        <location evidence="5">Clathrin-coated vesicle membrane</location>
        <topology evidence="5">Peripheral membrane protein</topology>
    </subcellularLocation>
</comment>
<comment type="disruption phenotype">
    <text evidence="5">Leads to sensitivity to cationic amphiphilic drugs (CADs) such as sertraline.</text>
</comment>
<comment type="miscellaneous">
    <text evidence="4">Present with 2890 molecules/cell in log phase SD medium.</text>
</comment>
<comment type="similarity">
    <text evidence="6">Belongs to the adaptor complexes medium subunit family.</text>
</comment>